<name>RNH_SALA4</name>
<accession>B5F8X2</accession>
<feature type="chain" id="PRO_1000090911" description="Ribonuclease H">
    <location>
        <begin position="1"/>
        <end position="155"/>
    </location>
</feature>
<feature type="domain" description="RNase H type-1" evidence="2">
    <location>
        <begin position="1"/>
        <end position="142"/>
    </location>
</feature>
<feature type="binding site" evidence="1">
    <location>
        <position position="10"/>
    </location>
    <ligand>
        <name>Mg(2+)</name>
        <dbReference type="ChEBI" id="CHEBI:18420"/>
        <label>1</label>
    </ligand>
</feature>
<feature type="binding site" evidence="1">
    <location>
        <position position="10"/>
    </location>
    <ligand>
        <name>Mg(2+)</name>
        <dbReference type="ChEBI" id="CHEBI:18420"/>
        <label>2</label>
    </ligand>
</feature>
<feature type="binding site" evidence="1">
    <location>
        <position position="48"/>
    </location>
    <ligand>
        <name>Mg(2+)</name>
        <dbReference type="ChEBI" id="CHEBI:18420"/>
        <label>1</label>
    </ligand>
</feature>
<feature type="binding site" evidence="1">
    <location>
        <position position="70"/>
    </location>
    <ligand>
        <name>Mg(2+)</name>
        <dbReference type="ChEBI" id="CHEBI:18420"/>
        <label>1</label>
    </ligand>
</feature>
<feature type="binding site" evidence="1">
    <location>
        <position position="134"/>
    </location>
    <ligand>
        <name>Mg(2+)</name>
        <dbReference type="ChEBI" id="CHEBI:18420"/>
        <label>2</label>
    </ligand>
</feature>
<protein>
    <recommendedName>
        <fullName evidence="1">Ribonuclease H</fullName>
        <shortName evidence="1">RNase H</shortName>
        <ecNumber evidence="1">3.1.26.4</ecNumber>
    </recommendedName>
</protein>
<sequence>MLKQVEIFTDGSCLGNPGPGGYGAILRYRGHEKTFSEGYTLTTNNRMELMAAIVALEALKEHCEVTLSTDSQYVRQGITQWIHNWKKRGWKTAEKKPVKNVDLWKRLDAALGQHQIKWVWVKGHAGHPENERCDELARAAAMNPTQEDSGYQAEA</sequence>
<proteinExistence type="inferred from homology"/>
<organism>
    <name type="scientific">Salmonella agona (strain SL483)</name>
    <dbReference type="NCBI Taxonomy" id="454166"/>
    <lineage>
        <taxon>Bacteria</taxon>
        <taxon>Pseudomonadati</taxon>
        <taxon>Pseudomonadota</taxon>
        <taxon>Gammaproteobacteria</taxon>
        <taxon>Enterobacterales</taxon>
        <taxon>Enterobacteriaceae</taxon>
        <taxon>Salmonella</taxon>
    </lineage>
</organism>
<dbReference type="EC" id="3.1.26.4" evidence="1"/>
<dbReference type="EMBL" id="CP001138">
    <property type="protein sequence ID" value="ACH48726.1"/>
    <property type="molecule type" value="Genomic_DNA"/>
</dbReference>
<dbReference type="RefSeq" id="WP_000917872.1">
    <property type="nucleotide sequence ID" value="NC_011149.1"/>
</dbReference>
<dbReference type="SMR" id="B5F8X2"/>
<dbReference type="KEGG" id="sea:SeAg_B0307"/>
<dbReference type="HOGENOM" id="CLU_030894_6_0_6"/>
<dbReference type="Proteomes" id="UP000008819">
    <property type="component" value="Chromosome"/>
</dbReference>
<dbReference type="GO" id="GO:0005737">
    <property type="term" value="C:cytoplasm"/>
    <property type="evidence" value="ECO:0007669"/>
    <property type="project" value="UniProtKB-SubCell"/>
</dbReference>
<dbReference type="GO" id="GO:0000287">
    <property type="term" value="F:magnesium ion binding"/>
    <property type="evidence" value="ECO:0007669"/>
    <property type="project" value="UniProtKB-UniRule"/>
</dbReference>
<dbReference type="GO" id="GO:0003676">
    <property type="term" value="F:nucleic acid binding"/>
    <property type="evidence" value="ECO:0007669"/>
    <property type="project" value="InterPro"/>
</dbReference>
<dbReference type="GO" id="GO:0004523">
    <property type="term" value="F:RNA-DNA hybrid ribonuclease activity"/>
    <property type="evidence" value="ECO:0007669"/>
    <property type="project" value="UniProtKB-UniRule"/>
</dbReference>
<dbReference type="GO" id="GO:0043137">
    <property type="term" value="P:DNA replication, removal of RNA primer"/>
    <property type="evidence" value="ECO:0007669"/>
    <property type="project" value="TreeGrafter"/>
</dbReference>
<dbReference type="CDD" id="cd09278">
    <property type="entry name" value="RNase_HI_prokaryote_like"/>
    <property type="match status" value="1"/>
</dbReference>
<dbReference type="FunFam" id="3.30.420.10:FF:000008">
    <property type="entry name" value="Ribonuclease H"/>
    <property type="match status" value="1"/>
</dbReference>
<dbReference type="Gene3D" id="3.30.420.10">
    <property type="entry name" value="Ribonuclease H-like superfamily/Ribonuclease H"/>
    <property type="match status" value="1"/>
</dbReference>
<dbReference type="HAMAP" id="MF_00042">
    <property type="entry name" value="RNase_H"/>
    <property type="match status" value="1"/>
</dbReference>
<dbReference type="InterPro" id="IPR050092">
    <property type="entry name" value="RNase_H"/>
</dbReference>
<dbReference type="InterPro" id="IPR012337">
    <property type="entry name" value="RNaseH-like_sf"/>
</dbReference>
<dbReference type="InterPro" id="IPR002156">
    <property type="entry name" value="RNaseH_domain"/>
</dbReference>
<dbReference type="InterPro" id="IPR036397">
    <property type="entry name" value="RNaseH_sf"/>
</dbReference>
<dbReference type="InterPro" id="IPR022892">
    <property type="entry name" value="RNaseHI"/>
</dbReference>
<dbReference type="NCBIfam" id="NF001236">
    <property type="entry name" value="PRK00203.1"/>
    <property type="match status" value="1"/>
</dbReference>
<dbReference type="PANTHER" id="PTHR10642">
    <property type="entry name" value="RIBONUCLEASE H1"/>
    <property type="match status" value="1"/>
</dbReference>
<dbReference type="PANTHER" id="PTHR10642:SF26">
    <property type="entry name" value="RIBONUCLEASE H1"/>
    <property type="match status" value="1"/>
</dbReference>
<dbReference type="Pfam" id="PF00075">
    <property type="entry name" value="RNase_H"/>
    <property type="match status" value="1"/>
</dbReference>
<dbReference type="SUPFAM" id="SSF53098">
    <property type="entry name" value="Ribonuclease H-like"/>
    <property type="match status" value="1"/>
</dbReference>
<dbReference type="PROSITE" id="PS50879">
    <property type="entry name" value="RNASE_H_1"/>
    <property type="match status" value="1"/>
</dbReference>
<reference key="1">
    <citation type="journal article" date="2011" name="J. Bacteriol.">
        <title>Comparative genomics of 28 Salmonella enterica isolates: evidence for CRISPR-mediated adaptive sublineage evolution.</title>
        <authorList>
            <person name="Fricke W.F."/>
            <person name="Mammel M.K."/>
            <person name="McDermott P.F."/>
            <person name="Tartera C."/>
            <person name="White D.G."/>
            <person name="Leclerc J.E."/>
            <person name="Ravel J."/>
            <person name="Cebula T.A."/>
        </authorList>
    </citation>
    <scope>NUCLEOTIDE SEQUENCE [LARGE SCALE GENOMIC DNA]</scope>
    <source>
        <strain>SL483</strain>
    </source>
</reference>
<comment type="function">
    <text evidence="1">Endonuclease that specifically degrades the RNA of RNA-DNA hybrids.</text>
</comment>
<comment type="catalytic activity">
    <reaction evidence="1">
        <text>Endonucleolytic cleavage to 5'-phosphomonoester.</text>
        <dbReference type="EC" id="3.1.26.4"/>
    </reaction>
</comment>
<comment type="cofactor">
    <cofactor evidence="1">
        <name>Mg(2+)</name>
        <dbReference type="ChEBI" id="CHEBI:18420"/>
    </cofactor>
    <text evidence="1">Binds 1 Mg(2+) ion per subunit. May bind a second metal ion at a regulatory site, or after substrate binding.</text>
</comment>
<comment type="subunit">
    <text evidence="1">Monomer.</text>
</comment>
<comment type="subcellular location">
    <subcellularLocation>
        <location evidence="1">Cytoplasm</location>
    </subcellularLocation>
</comment>
<comment type="similarity">
    <text evidence="1">Belongs to the RNase H family.</text>
</comment>
<keyword id="KW-0963">Cytoplasm</keyword>
<keyword id="KW-0255">Endonuclease</keyword>
<keyword id="KW-0378">Hydrolase</keyword>
<keyword id="KW-0460">Magnesium</keyword>
<keyword id="KW-0479">Metal-binding</keyword>
<keyword id="KW-0540">Nuclease</keyword>
<evidence type="ECO:0000255" key="1">
    <source>
        <dbReference type="HAMAP-Rule" id="MF_00042"/>
    </source>
</evidence>
<evidence type="ECO:0000255" key="2">
    <source>
        <dbReference type="PROSITE-ProRule" id="PRU00408"/>
    </source>
</evidence>
<gene>
    <name evidence="1" type="primary">rnhA</name>
    <name type="ordered locus">SeAg_B0307</name>
</gene>